<proteinExistence type="evidence at protein level"/>
<organism>
    <name type="scientific">Abutilon mosaic virus (isolate West India)</name>
    <name type="common">AbMV</name>
    <dbReference type="NCBI Taxonomy" id="10816"/>
    <lineage>
        <taxon>Viruses</taxon>
        <taxon>Monodnaviria</taxon>
        <taxon>Shotokuvirae</taxon>
        <taxon>Cressdnaviricota</taxon>
        <taxon>Repensiviricetes</taxon>
        <taxon>Geplafuvirales</taxon>
        <taxon>Geminiviridae</taxon>
        <taxon>Begomovirus</taxon>
        <taxon>Begomovirus bauri</taxon>
    </lineage>
</organism>
<gene>
    <name type="ORF">BR1</name>
    <name type="ORF">BV1</name>
</gene>
<protein>
    <recommendedName>
        <fullName>Nuclear shuttle protein</fullName>
        <shortName>NSP</shortName>
    </recommendedName>
    <alternativeName>
        <fullName>Protein BR1</fullName>
    </alternativeName>
    <alternativeName>
        <fullName>Protein BV1</fullName>
    </alternativeName>
</protein>
<comment type="function">
    <text evidence="3">Binds to the genomic viral ssDNA, shuttles it into and out of the cell nucleus. Begomoviruses use 2 proteins to transport their DNA from cell to cell. The nuclear shuttle protein (NSP) shuttles it between nucleus and cytoplasm and the movement protein (MP) probably transports the DNA-NSP complex to the cell periphery and facilitates movement across the cell wall.</text>
</comment>
<comment type="subunit">
    <text evidence="1">Binds to single-stranded and double-stranded viral DNA. Interacts with the host nuclear shuttle interacting (NSI) protein. This interaction may allow NSP to recruit NSI monomers to the viral genome and thus regulate nuclear export of viral genome by NSP (By similarity).</text>
</comment>
<comment type="subcellular location">
    <subcellularLocation>
        <location>Host nucleus</location>
    </subcellularLocation>
    <subcellularLocation>
        <location>Host cytoplasm</location>
    </subcellularLocation>
    <subcellularLocation>
        <location>Host cell membrane</location>
        <topology>Peripheral membrane protein</topology>
        <orientation>Cytoplasmic side</orientation>
    </subcellularLocation>
    <text>Translocated to the plasma membrane by the movement protein BC1.</text>
</comment>
<comment type="similarity">
    <text evidence="4">Belongs to the begomovirus nuclear shuttle protein family.</text>
</comment>
<organismHost>
    <name type="scientific">Abutilon</name>
    <dbReference type="NCBI Taxonomy" id="3630"/>
</organismHost>
<organismHost>
    <name type="scientific">Gossypium hirsutum</name>
    <name type="common">Upland cotton</name>
    <name type="synonym">Gossypium mexicanum</name>
    <dbReference type="NCBI Taxonomy" id="3635"/>
</organismHost>
<organismHost>
    <name type="scientific">Hibiscus</name>
    <dbReference type="NCBI Taxonomy" id="47605"/>
</organismHost>
<organismHost>
    <name type="scientific">Malva</name>
    <dbReference type="NCBI Taxonomy" id="96479"/>
</organismHost>
<organismHost>
    <name type="scientific">Phaseolus vulgaris</name>
    <name type="common">Kidney bean</name>
    <name type="synonym">French bean</name>
    <dbReference type="NCBI Taxonomy" id="3885"/>
</organismHost>
<organismHost>
    <name type="scientific">Sida</name>
    <dbReference type="NCBI Taxonomy" id="108335"/>
</organismHost>
<reference key="1">
    <citation type="journal article" date="1990" name="Virology">
        <title>The nucleotide sequence of abutilon mosaic virus reveals prokaryotic as well as eukaryotic features.</title>
        <authorList>
            <person name="Frischmuth T."/>
            <person name="Zimmat G."/>
            <person name="Jeske H."/>
        </authorList>
    </citation>
    <scope>NUCLEOTIDE SEQUENCE [GENOMIC DNA]</scope>
</reference>
<reference key="2">
    <citation type="submission" date="2003-11" db="EMBL/GenBank/DDBJ databases">
        <authorList>
            <person name="Jeske H."/>
        </authorList>
    </citation>
    <scope>SEQUENCE REVISION TO 112; 232 AND C-TERMINUS</scope>
</reference>
<reference key="3">
    <citation type="journal article" date="2001" name="Virology">
        <title>Movement proteins (BC1 and BV1) of Abutilon mosaic geminivirus are cotransported in and between cells of sink but not of source leaves as detected by green fluorescent protein tagging.</title>
        <authorList>
            <person name="Zhang S.C."/>
            <person name="Wege C."/>
            <person name="Jeske H."/>
        </authorList>
    </citation>
    <scope>SUBCELLULAR LOCATION</scope>
</reference>
<reference key="4">
    <citation type="journal article" date="2004" name="J. Virol.">
        <title>Interaction of DNA with the movement proteins of geminiviruses revisited.</title>
        <authorList>
            <person name="Hehnle S."/>
            <person name="Wege C."/>
            <person name="Jeske H."/>
        </authorList>
    </citation>
    <scope>FUNCTION</scope>
    <scope>DNA-BINDING</scope>
</reference>
<reference key="5">
    <citation type="journal article" date="2007" name="Protoplasma">
        <title>The movement protein BC1 promotes redirection of the nuclear shuttle protein BV1 of Abutilon mosaic geminivirus to the plasma membrane in fission yeast.</title>
        <authorList>
            <person name="Frischmuth S."/>
            <person name="Wege C."/>
            <person name="Huelsefr D."/>
            <person name="Jeske H."/>
        </authorList>
    </citation>
    <scope>SUBCELLULAR LOCATION</scope>
</reference>
<dbReference type="EMBL" id="X15984">
    <property type="protein sequence ID" value="CAA34114.3"/>
    <property type="molecule type" value="Genomic_DNA"/>
</dbReference>
<dbReference type="PIR" id="E36214">
    <property type="entry name" value="QQCVW5"/>
</dbReference>
<dbReference type="KEGG" id="vg:956374"/>
<dbReference type="Proteomes" id="UP000006885">
    <property type="component" value="Genome"/>
</dbReference>
<dbReference type="GO" id="GO:0043657">
    <property type="term" value="C:host cell"/>
    <property type="evidence" value="ECO:0007669"/>
    <property type="project" value="InterPro"/>
</dbReference>
<dbReference type="GO" id="GO:0030430">
    <property type="term" value="C:host cell cytoplasm"/>
    <property type="evidence" value="ECO:0007669"/>
    <property type="project" value="UniProtKB-SubCell"/>
</dbReference>
<dbReference type="GO" id="GO:0042025">
    <property type="term" value="C:host cell nucleus"/>
    <property type="evidence" value="ECO:0007669"/>
    <property type="project" value="UniProtKB-SubCell"/>
</dbReference>
<dbReference type="GO" id="GO:0020002">
    <property type="term" value="C:host cell plasma membrane"/>
    <property type="evidence" value="ECO:0007669"/>
    <property type="project" value="UniProtKB-SubCell"/>
</dbReference>
<dbReference type="GO" id="GO:0016020">
    <property type="term" value="C:membrane"/>
    <property type="evidence" value="ECO:0007669"/>
    <property type="project" value="UniProtKB-KW"/>
</dbReference>
<dbReference type="GO" id="GO:0019028">
    <property type="term" value="C:viral capsid"/>
    <property type="evidence" value="ECO:0007669"/>
    <property type="project" value="InterPro"/>
</dbReference>
<dbReference type="GO" id="GO:0003697">
    <property type="term" value="F:single-stranded DNA binding"/>
    <property type="evidence" value="ECO:0007669"/>
    <property type="project" value="InterPro"/>
</dbReference>
<dbReference type="GO" id="GO:0005198">
    <property type="term" value="F:structural molecule activity"/>
    <property type="evidence" value="ECO:0007669"/>
    <property type="project" value="InterPro"/>
</dbReference>
<dbReference type="GO" id="GO:0051027">
    <property type="term" value="P:DNA transport"/>
    <property type="evidence" value="ECO:0007669"/>
    <property type="project" value="InterPro"/>
</dbReference>
<dbReference type="GO" id="GO:0046740">
    <property type="term" value="P:transport of virus in host, cell to cell"/>
    <property type="evidence" value="ECO:0007669"/>
    <property type="project" value="UniProtKB-KW"/>
</dbReference>
<dbReference type="InterPro" id="IPR001530">
    <property type="entry name" value="Gemini_BR1"/>
</dbReference>
<dbReference type="InterPro" id="IPR000263">
    <property type="entry name" value="GV_A/BR1_coat"/>
</dbReference>
<dbReference type="Pfam" id="PF00844">
    <property type="entry name" value="Gemini_coat"/>
    <property type="match status" value="1"/>
</dbReference>
<dbReference type="PRINTS" id="PR00223">
    <property type="entry name" value="GEMCOATARBR1"/>
</dbReference>
<dbReference type="PRINTS" id="PR00225">
    <property type="entry name" value="GEMCOATBR1"/>
</dbReference>
<sequence length="256" mass="29514">MYPSRNKRGSYFNQRRQYSRNHVWKRPTAAKRHDWKRRPSNTSKPNDEPKMSAQRIHENQYGPEFVMAQNSAISSFISYPDLGRSEPNRSRSYIRLKQLRFKGTVKIEQVPLAMNMDGSTPKVEGVFSLVIVVDRKPHLGPSGCLHTFDELFGARIHSHGNLSVTPALKDRYYIRHVCKRVLSVEKDTLMVDVEGSIPLSNRRINCWATFKDVDRESCKGVYDNISKNALLVYYCWMSDTPAKASTFVSFDLDYIG</sequence>
<keyword id="KW-0238">DNA-binding</keyword>
<keyword id="KW-1032">Host cell membrane</keyword>
<keyword id="KW-1035">Host cytoplasm</keyword>
<keyword id="KW-1043">Host membrane</keyword>
<keyword id="KW-1048">Host nucleus</keyword>
<keyword id="KW-0945">Host-virus interaction</keyword>
<keyword id="KW-0472">Membrane</keyword>
<keyword id="KW-1185">Reference proteome</keyword>
<keyword id="KW-0813">Transport</keyword>
<keyword id="KW-0916">Viral movement protein</keyword>
<evidence type="ECO:0000250" key="1"/>
<evidence type="ECO:0000256" key="2">
    <source>
        <dbReference type="SAM" id="MobiDB-lite"/>
    </source>
</evidence>
<evidence type="ECO:0000269" key="3">
    <source>
    </source>
</evidence>
<evidence type="ECO:0000305" key="4"/>
<feature type="chain" id="PRO_0000222260" description="Nuclear shuttle protein">
    <location>
        <begin position="1"/>
        <end position="256"/>
    </location>
</feature>
<feature type="region of interest" description="Disordered" evidence="2">
    <location>
        <begin position="1"/>
        <end position="53"/>
    </location>
</feature>
<feature type="region of interest" description="Interaction with Arabidopsis thaliana NSI protein" evidence="1">
    <location>
        <begin position="150"/>
        <end position="187"/>
    </location>
</feature>
<feature type="short sequence motif" description="Bipartite nuclear localization signal" evidence="1">
    <location>
        <begin position="21"/>
        <end position="42"/>
    </location>
</feature>
<feature type="short sequence motif" description="Nuclear localization signal" evidence="1">
    <location>
        <begin position="81"/>
        <end position="96"/>
    </location>
</feature>
<feature type="compositionally biased region" description="Basic residues" evidence="2">
    <location>
        <begin position="17"/>
        <end position="39"/>
    </location>
</feature>
<name>NSP_ABMVW</name>
<accession>P21945</accession>